<keyword id="KW-0067">ATP-binding</keyword>
<keyword id="KW-1003">Cell membrane</keyword>
<keyword id="KW-0472">Membrane</keyword>
<keyword id="KW-0547">Nucleotide-binding</keyword>
<keyword id="KW-1278">Translocase</keyword>
<keyword id="KW-0813">Transport</keyword>
<evidence type="ECO:0000255" key="1">
    <source>
        <dbReference type="HAMAP-Rule" id="MF_01726"/>
    </source>
</evidence>
<name>POTA_STRTD</name>
<sequence>MTNPIIAFQNVSKVFEDSGTQVLKDINFELEEGKFYTLLGASGSGKSTILNIIAGLLDATSGDVLLDGKRINDIPINKRDVHTVFQSYALFPHMNVFDNVAFALKLKKVPKKEIEERVKEALKMVQLDGYQKRSIQKLSGGQRQRVAIARAIINQPRVVLLDEPLSALDLKLRTEMQYELRELQKRLGITFVFVTHDQEEALAMSDWIFVMNDGEIVQSGTPVDIYDEPINHFVATFIGESNILPGVMIEDYLVEFNGKRFESVDGGMRPNEPVEVVIRPEDLQITLPEEGKLQVRVETQLFRGVHYEIIAYDNLGNEWMIHSTRKAIEGEIIGLDFTPEDIHIMRLNETEEEFDARIEEYVEMEEPEDGLINAIEEERHEENS</sequence>
<dbReference type="EC" id="7.6.2.11" evidence="1"/>
<dbReference type="EMBL" id="CP000419">
    <property type="protein sequence ID" value="ABJ66651.1"/>
    <property type="molecule type" value="Genomic_DNA"/>
</dbReference>
<dbReference type="RefSeq" id="WP_002953381.1">
    <property type="nucleotide sequence ID" value="NC_008532.1"/>
</dbReference>
<dbReference type="SMR" id="Q03JH1"/>
<dbReference type="KEGG" id="ste:STER_1496"/>
<dbReference type="HOGENOM" id="CLU_000604_1_1_9"/>
<dbReference type="GO" id="GO:0043190">
    <property type="term" value="C:ATP-binding cassette (ABC) transporter complex"/>
    <property type="evidence" value="ECO:0007669"/>
    <property type="project" value="InterPro"/>
</dbReference>
<dbReference type="GO" id="GO:0015417">
    <property type="term" value="F:ABC-type polyamine transporter activity"/>
    <property type="evidence" value="ECO:0007669"/>
    <property type="project" value="UniProtKB-EC"/>
</dbReference>
<dbReference type="GO" id="GO:0005524">
    <property type="term" value="F:ATP binding"/>
    <property type="evidence" value="ECO:0007669"/>
    <property type="project" value="UniProtKB-KW"/>
</dbReference>
<dbReference type="GO" id="GO:0016887">
    <property type="term" value="F:ATP hydrolysis activity"/>
    <property type="evidence" value="ECO:0007669"/>
    <property type="project" value="InterPro"/>
</dbReference>
<dbReference type="FunFam" id="3.40.50.300:FF:000042">
    <property type="entry name" value="Maltose/maltodextrin ABC transporter, ATP-binding protein"/>
    <property type="match status" value="1"/>
</dbReference>
<dbReference type="Gene3D" id="2.40.50.100">
    <property type="match status" value="1"/>
</dbReference>
<dbReference type="Gene3D" id="3.40.50.300">
    <property type="entry name" value="P-loop containing nucleotide triphosphate hydrolases"/>
    <property type="match status" value="1"/>
</dbReference>
<dbReference type="InterPro" id="IPR003593">
    <property type="entry name" value="AAA+_ATPase"/>
</dbReference>
<dbReference type="InterPro" id="IPR050093">
    <property type="entry name" value="ABC_SmlMolc_Importer"/>
</dbReference>
<dbReference type="InterPro" id="IPR003439">
    <property type="entry name" value="ABC_transporter-like_ATP-bd"/>
</dbReference>
<dbReference type="InterPro" id="IPR017871">
    <property type="entry name" value="ABC_transporter-like_CS"/>
</dbReference>
<dbReference type="InterPro" id="IPR008995">
    <property type="entry name" value="Mo/tungstate-bd_C_term_dom"/>
</dbReference>
<dbReference type="InterPro" id="IPR027417">
    <property type="entry name" value="P-loop_NTPase"/>
</dbReference>
<dbReference type="InterPro" id="IPR013611">
    <property type="entry name" value="Transp-assoc_OB_typ2"/>
</dbReference>
<dbReference type="PANTHER" id="PTHR42781">
    <property type="entry name" value="SPERMIDINE/PUTRESCINE IMPORT ATP-BINDING PROTEIN POTA"/>
    <property type="match status" value="1"/>
</dbReference>
<dbReference type="PANTHER" id="PTHR42781:SF4">
    <property type="entry name" value="SPERMIDINE_PUTRESCINE IMPORT ATP-BINDING PROTEIN POTA"/>
    <property type="match status" value="1"/>
</dbReference>
<dbReference type="Pfam" id="PF00005">
    <property type="entry name" value="ABC_tran"/>
    <property type="match status" value="1"/>
</dbReference>
<dbReference type="Pfam" id="PF08402">
    <property type="entry name" value="TOBE_2"/>
    <property type="match status" value="1"/>
</dbReference>
<dbReference type="SMART" id="SM00382">
    <property type="entry name" value="AAA"/>
    <property type="match status" value="1"/>
</dbReference>
<dbReference type="SUPFAM" id="SSF50331">
    <property type="entry name" value="MOP-like"/>
    <property type="match status" value="1"/>
</dbReference>
<dbReference type="SUPFAM" id="SSF52540">
    <property type="entry name" value="P-loop containing nucleoside triphosphate hydrolases"/>
    <property type="match status" value="1"/>
</dbReference>
<dbReference type="PROSITE" id="PS00211">
    <property type="entry name" value="ABC_TRANSPORTER_1"/>
    <property type="match status" value="1"/>
</dbReference>
<dbReference type="PROSITE" id="PS50893">
    <property type="entry name" value="ABC_TRANSPORTER_2"/>
    <property type="match status" value="1"/>
</dbReference>
<dbReference type="PROSITE" id="PS51305">
    <property type="entry name" value="POTA"/>
    <property type="match status" value="1"/>
</dbReference>
<accession>Q03JH1</accession>
<feature type="chain" id="PRO_0000286316" description="Spermidine/putrescine import ATP-binding protein PotA">
    <location>
        <begin position="1"/>
        <end position="384"/>
    </location>
</feature>
<feature type="domain" description="ABC transporter" evidence="1">
    <location>
        <begin position="6"/>
        <end position="238"/>
    </location>
</feature>
<feature type="binding site" evidence="1">
    <location>
        <begin position="40"/>
        <end position="47"/>
    </location>
    <ligand>
        <name>ATP</name>
        <dbReference type="ChEBI" id="CHEBI:30616"/>
    </ligand>
</feature>
<organism>
    <name type="scientific">Streptococcus thermophilus (strain ATCC BAA-491 / LMD-9)</name>
    <dbReference type="NCBI Taxonomy" id="322159"/>
    <lineage>
        <taxon>Bacteria</taxon>
        <taxon>Bacillati</taxon>
        <taxon>Bacillota</taxon>
        <taxon>Bacilli</taxon>
        <taxon>Lactobacillales</taxon>
        <taxon>Streptococcaceae</taxon>
        <taxon>Streptococcus</taxon>
    </lineage>
</organism>
<gene>
    <name evidence="1" type="primary">potA</name>
    <name type="ordered locus">STER_1496</name>
</gene>
<protein>
    <recommendedName>
        <fullName evidence="1">Spermidine/putrescine import ATP-binding protein PotA</fullName>
        <ecNumber evidence="1">7.6.2.11</ecNumber>
    </recommendedName>
</protein>
<comment type="function">
    <text evidence="1">Part of the ABC transporter complex PotABCD involved in spermidine/putrescine import. Responsible for energy coupling to the transport system.</text>
</comment>
<comment type="catalytic activity">
    <reaction evidence="1">
        <text>ATP + H2O + polyamine-[polyamine-binding protein]Side 1 = ADP + phosphate + polyamineSide 2 + [polyamine-binding protein]Side 1.</text>
        <dbReference type="EC" id="7.6.2.11"/>
    </reaction>
</comment>
<comment type="subunit">
    <text evidence="1">The complex is composed of two ATP-binding proteins (PotA), two transmembrane proteins (PotB and PotC) and a solute-binding protein (PotD).</text>
</comment>
<comment type="subcellular location">
    <subcellularLocation>
        <location evidence="1">Cell membrane</location>
        <topology evidence="1">Peripheral membrane protein</topology>
    </subcellularLocation>
</comment>
<comment type="similarity">
    <text evidence="1">Belongs to the ABC transporter superfamily. Spermidine/putrescine importer (TC 3.A.1.11.1) family.</text>
</comment>
<proteinExistence type="inferred from homology"/>
<reference key="1">
    <citation type="journal article" date="2006" name="Proc. Natl. Acad. Sci. U.S.A.">
        <title>Comparative genomics of the lactic acid bacteria.</title>
        <authorList>
            <person name="Makarova K.S."/>
            <person name="Slesarev A."/>
            <person name="Wolf Y.I."/>
            <person name="Sorokin A."/>
            <person name="Mirkin B."/>
            <person name="Koonin E.V."/>
            <person name="Pavlov A."/>
            <person name="Pavlova N."/>
            <person name="Karamychev V."/>
            <person name="Polouchine N."/>
            <person name="Shakhova V."/>
            <person name="Grigoriev I."/>
            <person name="Lou Y."/>
            <person name="Rohksar D."/>
            <person name="Lucas S."/>
            <person name="Huang K."/>
            <person name="Goodstein D.M."/>
            <person name="Hawkins T."/>
            <person name="Plengvidhya V."/>
            <person name="Welker D."/>
            <person name="Hughes J."/>
            <person name="Goh Y."/>
            <person name="Benson A."/>
            <person name="Baldwin K."/>
            <person name="Lee J.-H."/>
            <person name="Diaz-Muniz I."/>
            <person name="Dosti B."/>
            <person name="Smeianov V."/>
            <person name="Wechter W."/>
            <person name="Barabote R."/>
            <person name="Lorca G."/>
            <person name="Altermann E."/>
            <person name="Barrangou R."/>
            <person name="Ganesan B."/>
            <person name="Xie Y."/>
            <person name="Rawsthorne H."/>
            <person name="Tamir D."/>
            <person name="Parker C."/>
            <person name="Breidt F."/>
            <person name="Broadbent J.R."/>
            <person name="Hutkins R."/>
            <person name="O'Sullivan D."/>
            <person name="Steele J."/>
            <person name="Unlu G."/>
            <person name="Saier M.H. Jr."/>
            <person name="Klaenhammer T."/>
            <person name="Richardson P."/>
            <person name="Kozyavkin S."/>
            <person name="Weimer B.C."/>
            <person name="Mills D.A."/>
        </authorList>
    </citation>
    <scope>NUCLEOTIDE SEQUENCE [LARGE SCALE GENOMIC DNA]</scope>
    <source>
        <strain>ATCC BAA-491 / LMD-9</strain>
    </source>
</reference>